<comment type="miscellaneous">
    <text>On the 2D-gel the determined pI of this unknown protein is: 6.44, its MW is: 38.6 kDa.</text>
</comment>
<feature type="chain" id="PRO_0000055535" description="Unknown protein from 2D-PAGE from elementary body">
    <location>
        <begin position="1"/>
        <end position="10" status="greater than"/>
    </location>
</feature>
<feature type="non-terminal residue">
    <location>
        <position position="10"/>
    </location>
</feature>
<accession>P38007</accession>
<proteinExistence type="evidence at protein level"/>
<organism>
    <name type="scientific">Chlamydia trachomatis serovar L2 (strain ATCC VR-902B / DSM 19102 / 434/Bu)</name>
    <dbReference type="NCBI Taxonomy" id="471472"/>
    <lineage>
        <taxon>Bacteria</taxon>
        <taxon>Pseudomonadati</taxon>
        <taxon>Chlamydiota</taxon>
        <taxon>Chlamydiia</taxon>
        <taxon>Chlamydiales</taxon>
        <taxon>Chlamydiaceae</taxon>
        <taxon>Chlamydia/Chlamydophila group</taxon>
        <taxon>Chlamydia</taxon>
    </lineage>
</organism>
<reference key="1">
    <citation type="submission" date="1994-09" db="UniProtKB">
        <authorList>
            <person name="Bini L."/>
            <person name="Santucci A."/>
            <person name="Magi B."/>
            <person name="Marzocchi B."/>
            <person name="Sanchez-Campillo M."/>
            <person name="Comanducci M."/>
            <person name="Christianen G."/>
            <person name="Birkelund S."/>
            <person name="Vtretou E."/>
            <person name="Ratti G."/>
            <person name="Pallini V."/>
        </authorList>
    </citation>
    <scope>PROTEIN SEQUENCE</scope>
</reference>
<name>UXA6_CHLT2</name>
<keyword id="KW-0903">Direct protein sequencing</keyword>
<protein>
    <recommendedName>
        <fullName>Unknown protein from 2D-PAGE from elementary body</fullName>
    </recommendedName>
</protein>
<sequence length="10" mass="1243">MNFKYIKKDG</sequence>